<comment type="function">
    <text evidence="1">Reversibly transfers an adenylyl group from ATP to 4'-phosphopantetheine, yielding dephospho-CoA (dPCoA) and pyrophosphate.</text>
</comment>
<comment type="catalytic activity">
    <reaction evidence="1">
        <text>(R)-4'-phosphopantetheine + ATP + H(+) = 3'-dephospho-CoA + diphosphate</text>
        <dbReference type="Rhea" id="RHEA:19801"/>
        <dbReference type="ChEBI" id="CHEBI:15378"/>
        <dbReference type="ChEBI" id="CHEBI:30616"/>
        <dbReference type="ChEBI" id="CHEBI:33019"/>
        <dbReference type="ChEBI" id="CHEBI:57328"/>
        <dbReference type="ChEBI" id="CHEBI:61723"/>
        <dbReference type="EC" id="2.7.7.3"/>
    </reaction>
</comment>
<comment type="cofactor">
    <cofactor evidence="1">
        <name>Mg(2+)</name>
        <dbReference type="ChEBI" id="CHEBI:18420"/>
    </cofactor>
</comment>
<comment type="pathway">
    <text evidence="1">Cofactor biosynthesis; coenzyme A biosynthesis; CoA from (R)-pantothenate: step 4/5.</text>
</comment>
<comment type="subunit">
    <text evidence="1">Homohexamer.</text>
</comment>
<comment type="subcellular location">
    <subcellularLocation>
        <location evidence="1">Cytoplasm</location>
    </subcellularLocation>
</comment>
<comment type="similarity">
    <text evidence="1">Belongs to the bacterial CoaD family.</text>
</comment>
<sequence length="161" mass="17393">MKTVVFPGSFDPVTLGHIDLITRASKLAERVVIAVAVNTSKRTLFNLNERCDLLSEATAHLSGIEVIPFSGLLADFAKEHNAQALIRGIRGTTDADYELQLAQVNKALNSELETILLPANAATGFISSTVVKEVFKHNGDIDPFAPPCVKQALLIKHSENS</sequence>
<name>COAD_PSYIN</name>
<feature type="chain" id="PRO_1000071523" description="Phosphopantetheine adenylyltransferase">
    <location>
        <begin position="1"/>
        <end position="161"/>
    </location>
</feature>
<feature type="binding site" evidence="1">
    <location>
        <begin position="9"/>
        <end position="10"/>
    </location>
    <ligand>
        <name>ATP</name>
        <dbReference type="ChEBI" id="CHEBI:30616"/>
    </ligand>
</feature>
<feature type="binding site" evidence="1">
    <location>
        <position position="9"/>
    </location>
    <ligand>
        <name>substrate</name>
    </ligand>
</feature>
<feature type="binding site" evidence="1">
    <location>
        <position position="17"/>
    </location>
    <ligand>
        <name>ATP</name>
        <dbReference type="ChEBI" id="CHEBI:30616"/>
    </ligand>
</feature>
<feature type="binding site" evidence="1">
    <location>
        <position position="41"/>
    </location>
    <ligand>
        <name>substrate</name>
    </ligand>
</feature>
<feature type="binding site" evidence="1">
    <location>
        <position position="73"/>
    </location>
    <ligand>
        <name>substrate</name>
    </ligand>
</feature>
<feature type="binding site" evidence="1">
    <location>
        <position position="87"/>
    </location>
    <ligand>
        <name>substrate</name>
    </ligand>
</feature>
<feature type="binding site" evidence="1">
    <location>
        <begin position="88"/>
        <end position="90"/>
    </location>
    <ligand>
        <name>ATP</name>
        <dbReference type="ChEBI" id="CHEBI:30616"/>
    </ligand>
</feature>
<feature type="binding site" evidence="1">
    <location>
        <position position="98"/>
    </location>
    <ligand>
        <name>ATP</name>
        <dbReference type="ChEBI" id="CHEBI:30616"/>
    </ligand>
</feature>
<feature type="binding site" evidence="1">
    <location>
        <begin position="123"/>
        <end position="129"/>
    </location>
    <ligand>
        <name>ATP</name>
        <dbReference type="ChEBI" id="CHEBI:30616"/>
    </ligand>
</feature>
<feature type="site" description="Transition state stabilizer" evidence="1">
    <location>
        <position position="17"/>
    </location>
</feature>
<keyword id="KW-0067">ATP-binding</keyword>
<keyword id="KW-0173">Coenzyme A biosynthesis</keyword>
<keyword id="KW-0963">Cytoplasm</keyword>
<keyword id="KW-0460">Magnesium</keyword>
<keyword id="KW-0547">Nucleotide-binding</keyword>
<keyword id="KW-0548">Nucleotidyltransferase</keyword>
<keyword id="KW-1185">Reference proteome</keyword>
<keyword id="KW-0808">Transferase</keyword>
<accession>A1SR02</accession>
<dbReference type="EC" id="2.7.7.3" evidence="1"/>
<dbReference type="EMBL" id="CP000510">
    <property type="protein sequence ID" value="ABM01917.1"/>
    <property type="molecule type" value="Genomic_DNA"/>
</dbReference>
<dbReference type="RefSeq" id="WP_011768476.1">
    <property type="nucleotide sequence ID" value="NC_008709.1"/>
</dbReference>
<dbReference type="SMR" id="A1SR02"/>
<dbReference type="STRING" id="357804.Ping_0043"/>
<dbReference type="KEGG" id="pin:Ping_0043"/>
<dbReference type="eggNOG" id="COG0669">
    <property type="taxonomic scope" value="Bacteria"/>
</dbReference>
<dbReference type="HOGENOM" id="CLU_100149_0_1_6"/>
<dbReference type="OrthoDB" id="9806661at2"/>
<dbReference type="UniPathway" id="UPA00241">
    <property type="reaction ID" value="UER00355"/>
</dbReference>
<dbReference type="Proteomes" id="UP000000639">
    <property type="component" value="Chromosome"/>
</dbReference>
<dbReference type="GO" id="GO:0005737">
    <property type="term" value="C:cytoplasm"/>
    <property type="evidence" value="ECO:0007669"/>
    <property type="project" value="UniProtKB-SubCell"/>
</dbReference>
<dbReference type="GO" id="GO:0005524">
    <property type="term" value="F:ATP binding"/>
    <property type="evidence" value="ECO:0007669"/>
    <property type="project" value="UniProtKB-KW"/>
</dbReference>
<dbReference type="GO" id="GO:0004595">
    <property type="term" value="F:pantetheine-phosphate adenylyltransferase activity"/>
    <property type="evidence" value="ECO:0007669"/>
    <property type="project" value="UniProtKB-UniRule"/>
</dbReference>
<dbReference type="GO" id="GO:0015937">
    <property type="term" value="P:coenzyme A biosynthetic process"/>
    <property type="evidence" value="ECO:0007669"/>
    <property type="project" value="UniProtKB-UniRule"/>
</dbReference>
<dbReference type="CDD" id="cd02163">
    <property type="entry name" value="PPAT"/>
    <property type="match status" value="1"/>
</dbReference>
<dbReference type="Gene3D" id="3.40.50.620">
    <property type="entry name" value="HUPs"/>
    <property type="match status" value="1"/>
</dbReference>
<dbReference type="HAMAP" id="MF_00151">
    <property type="entry name" value="PPAT_bact"/>
    <property type="match status" value="1"/>
</dbReference>
<dbReference type="InterPro" id="IPR004821">
    <property type="entry name" value="Cyt_trans-like"/>
</dbReference>
<dbReference type="InterPro" id="IPR001980">
    <property type="entry name" value="PPAT"/>
</dbReference>
<dbReference type="InterPro" id="IPR014729">
    <property type="entry name" value="Rossmann-like_a/b/a_fold"/>
</dbReference>
<dbReference type="NCBIfam" id="TIGR01510">
    <property type="entry name" value="coaD_prev_kdtB"/>
    <property type="match status" value="1"/>
</dbReference>
<dbReference type="NCBIfam" id="TIGR00125">
    <property type="entry name" value="cyt_tran_rel"/>
    <property type="match status" value="1"/>
</dbReference>
<dbReference type="PANTHER" id="PTHR21342">
    <property type="entry name" value="PHOSPHOPANTETHEINE ADENYLYLTRANSFERASE"/>
    <property type="match status" value="1"/>
</dbReference>
<dbReference type="PANTHER" id="PTHR21342:SF1">
    <property type="entry name" value="PHOSPHOPANTETHEINE ADENYLYLTRANSFERASE"/>
    <property type="match status" value="1"/>
</dbReference>
<dbReference type="Pfam" id="PF01467">
    <property type="entry name" value="CTP_transf_like"/>
    <property type="match status" value="1"/>
</dbReference>
<dbReference type="PRINTS" id="PR01020">
    <property type="entry name" value="LPSBIOSNTHSS"/>
</dbReference>
<dbReference type="SUPFAM" id="SSF52374">
    <property type="entry name" value="Nucleotidylyl transferase"/>
    <property type="match status" value="1"/>
</dbReference>
<protein>
    <recommendedName>
        <fullName evidence="1">Phosphopantetheine adenylyltransferase</fullName>
        <ecNumber evidence="1">2.7.7.3</ecNumber>
    </recommendedName>
    <alternativeName>
        <fullName evidence="1">Dephospho-CoA pyrophosphorylase</fullName>
    </alternativeName>
    <alternativeName>
        <fullName evidence="1">Pantetheine-phosphate adenylyltransferase</fullName>
        <shortName evidence="1">PPAT</shortName>
    </alternativeName>
</protein>
<evidence type="ECO:0000255" key="1">
    <source>
        <dbReference type="HAMAP-Rule" id="MF_00151"/>
    </source>
</evidence>
<reference key="1">
    <citation type="journal article" date="2008" name="BMC Genomics">
        <title>Genomics of an extreme psychrophile, Psychromonas ingrahamii.</title>
        <authorList>
            <person name="Riley M."/>
            <person name="Staley J.T."/>
            <person name="Danchin A."/>
            <person name="Wang T.Z."/>
            <person name="Brettin T.S."/>
            <person name="Hauser L.J."/>
            <person name="Land M.L."/>
            <person name="Thompson L.S."/>
        </authorList>
    </citation>
    <scope>NUCLEOTIDE SEQUENCE [LARGE SCALE GENOMIC DNA]</scope>
    <source>
        <strain>DSM 17664 / CCUG 51855 / 37</strain>
    </source>
</reference>
<gene>
    <name evidence="1" type="primary">coaD</name>
    <name type="ordered locus">Ping_0043</name>
</gene>
<organism>
    <name type="scientific">Psychromonas ingrahamii (strain DSM 17664 / CCUG 51855 / 37)</name>
    <dbReference type="NCBI Taxonomy" id="357804"/>
    <lineage>
        <taxon>Bacteria</taxon>
        <taxon>Pseudomonadati</taxon>
        <taxon>Pseudomonadota</taxon>
        <taxon>Gammaproteobacteria</taxon>
        <taxon>Alteromonadales</taxon>
        <taxon>Psychromonadaceae</taxon>
        <taxon>Psychromonas</taxon>
    </lineage>
</organism>
<proteinExistence type="inferred from homology"/>